<gene>
    <name type="primary">rpl15</name>
</gene>
<feature type="initiator methionine" description="Removed" evidence="1">
    <location>
        <position position="1"/>
    </location>
</feature>
<feature type="chain" id="PRO_0000127537" description="Large ribosomal subunit protein eL15">
    <location>
        <begin position="2"/>
        <end position="204"/>
    </location>
</feature>
<protein>
    <recommendedName>
        <fullName evidence="3">Large ribosomal subunit protein eL15</fullName>
    </recommendedName>
    <alternativeName>
        <fullName>60S ribosomal protein L15</fullName>
    </alternativeName>
</protein>
<accession>Q7T3N7</accession>
<reference key="1">
    <citation type="submission" date="2003-03" db="EMBL/GenBank/DDBJ databases">
        <title>Evaluating the potential of ribosomal protein L15 as a novel marker for phylogenetic analysis: a comparative analysis of 15 teleost RPL15 cDNAs.</title>
        <authorList>
            <person name="Song P."/>
            <person name="Zhang J."/>
            <person name="Xiang Z."/>
        </authorList>
    </citation>
    <scope>NUCLEOTIDE SEQUENCE [MRNA]</scope>
    <source>
        <tissue>Liver</tissue>
    </source>
</reference>
<keyword id="KW-0963">Cytoplasm</keyword>
<keyword id="KW-1185">Reference proteome</keyword>
<keyword id="KW-0687">Ribonucleoprotein</keyword>
<keyword id="KW-0689">Ribosomal protein</keyword>
<name>RL15_CYPCA</name>
<dbReference type="EMBL" id="AY249415">
    <property type="protein sequence ID" value="AAP35252.1"/>
    <property type="molecule type" value="mRNA"/>
</dbReference>
<dbReference type="SMR" id="Q7T3N7"/>
<dbReference type="Proteomes" id="UP000694384">
    <property type="component" value="Unplaced"/>
</dbReference>
<dbReference type="Proteomes" id="UP000694427">
    <property type="component" value="Unplaced"/>
</dbReference>
<dbReference type="Proteomes" id="UP000694700">
    <property type="component" value="Unplaced"/>
</dbReference>
<dbReference type="Proteomes" id="UP000694701">
    <property type="component" value="Unplaced"/>
</dbReference>
<dbReference type="Proteomes" id="UP001155660">
    <property type="component" value="Unplaced"/>
</dbReference>
<dbReference type="GO" id="GO:0022625">
    <property type="term" value="C:cytosolic large ribosomal subunit"/>
    <property type="evidence" value="ECO:0007669"/>
    <property type="project" value="TreeGrafter"/>
</dbReference>
<dbReference type="GO" id="GO:0003723">
    <property type="term" value="F:RNA binding"/>
    <property type="evidence" value="ECO:0007669"/>
    <property type="project" value="TreeGrafter"/>
</dbReference>
<dbReference type="GO" id="GO:0003735">
    <property type="term" value="F:structural constituent of ribosome"/>
    <property type="evidence" value="ECO:0007669"/>
    <property type="project" value="InterPro"/>
</dbReference>
<dbReference type="GO" id="GO:0002181">
    <property type="term" value="P:cytoplasmic translation"/>
    <property type="evidence" value="ECO:0007669"/>
    <property type="project" value="TreeGrafter"/>
</dbReference>
<dbReference type="FunFam" id="3.40.1120.10:FF:000001">
    <property type="entry name" value="Ribosomal protein L15"/>
    <property type="match status" value="1"/>
</dbReference>
<dbReference type="Gene3D" id="3.40.1120.10">
    <property type="entry name" value="Ribosomal protein l15e"/>
    <property type="match status" value="1"/>
</dbReference>
<dbReference type="InterPro" id="IPR024794">
    <property type="entry name" value="Rbsml_eL15_core_dom_sf"/>
</dbReference>
<dbReference type="InterPro" id="IPR000439">
    <property type="entry name" value="Ribosomal_eL15"/>
</dbReference>
<dbReference type="InterPro" id="IPR020925">
    <property type="entry name" value="Ribosomal_eL15_CS"/>
</dbReference>
<dbReference type="InterPro" id="IPR012678">
    <property type="entry name" value="Ribosomal_uL23/eL15/eS24_sf"/>
</dbReference>
<dbReference type="NCBIfam" id="NF003269">
    <property type="entry name" value="PRK04243.1"/>
    <property type="match status" value="1"/>
</dbReference>
<dbReference type="PANTHER" id="PTHR11847:SF4">
    <property type="entry name" value="LARGE RIBOSOMAL SUBUNIT PROTEIN EL15"/>
    <property type="match status" value="1"/>
</dbReference>
<dbReference type="PANTHER" id="PTHR11847">
    <property type="entry name" value="RIBOSOMAL PROTEIN L15"/>
    <property type="match status" value="1"/>
</dbReference>
<dbReference type="Pfam" id="PF00827">
    <property type="entry name" value="Ribosomal_L15e"/>
    <property type="match status" value="1"/>
</dbReference>
<dbReference type="SMART" id="SM01384">
    <property type="entry name" value="Ribosomal_L15e"/>
    <property type="match status" value="1"/>
</dbReference>
<dbReference type="SUPFAM" id="SSF54189">
    <property type="entry name" value="Ribosomal proteins S24e, L23 and L15e"/>
    <property type="match status" value="1"/>
</dbReference>
<dbReference type="PROSITE" id="PS01194">
    <property type="entry name" value="RIBOSOMAL_L15E"/>
    <property type="match status" value="1"/>
</dbReference>
<comment type="function">
    <text evidence="2">Component of the large ribosomal subunit. The ribosome is a large ribonucleoprotein complex responsible for the synthesis of proteins in the cell.</text>
</comment>
<comment type="subunit">
    <text evidence="2">Component of the large ribosomal subunit.</text>
</comment>
<comment type="subcellular location">
    <subcellularLocation>
        <location evidence="2">Cytoplasm</location>
    </subcellularLocation>
</comment>
<comment type="similarity">
    <text evidence="3">Belongs to the eukaryotic ribosomal protein eL15 family.</text>
</comment>
<sequence>MGAYKYMQELWRKKQSDVMRFLLRVRCWQYRQLSALHRAPRPTRPDKARRLGYKAKQGYVIYRIRVRRGGRKRPVPKGATYGKPVHHGVNQIKFARSLQSVAEERAGRHCGGLRVLSSYWVGEDSTYKFFEVVLIDTFHKAIRRDPDTQWITKAVHKHREMRGLTSAGKKSRGLGKGHKFHLTIGGSRRAAWKRRNTLQLHRYR</sequence>
<organism>
    <name type="scientific">Cyprinus carpio</name>
    <name type="common">Common carp</name>
    <dbReference type="NCBI Taxonomy" id="7962"/>
    <lineage>
        <taxon>Eukaryota</taxon>
        <taxon>Metazoa</taxon>
        <taxon>Chordata</taxon>
        <taxon>Craniata</taxon>
        <taxon>Vertebrata</taxon>
        <taxon>Euteleostomi</taxon>
        <taxon>Actinopterygii</taxon>
        <taxon>Neopterygii</taxon>
        <taxon>Teleostei</taxon>
        <taxon>Ostariophysi</taxon>
        <taxon>Cypriniformes</taxon>
        <taxon>Cyprinidae</taxon>
        <taxon>Cyprininae</taxon>
        <taxon>Cyprinus</taxon>
    </lineage>
</organism>
<evidence type="ECO:0000250" key="1"/>
<evidence type="ECO:0000250" key="2">
    <source>
        <dbReference type="UniProtKB" id="P61313"/>
    </source>
</evidence>
<evidence type="ECO:0000305" key="3"/>
<proteinExistence type="evidence at transcript level"/>